<name>MNMA_RHIWR</name>
<dbReference type="EC" id="2.8.1.13" evidence="1"/>
<dbReference type="EMBL" id="CP000699">
    <property type="protein sequence ID" value="ABQ71088.1"/>
    <property type="status" value="ALT_INIT"/>
    <property type="molecule type" value="Genomic_DNA"/>
</dbReference>
<dbReference type="SMR" id="A5VFM2"/>
<dbReference type="STRING" id="392499.Swit_4751"/>
<dbReference type="PaxDb" id="392499-Swit_4751"/>
<dbReference type="KEGG" id="swi:Swit_4751"/>
<dbReference type="eggNOG" id="COG0482">
    <property type="taxonomic scope" value="Bacteria"/>
</dbReference>
<dbReference type="HOGENOM" id="CLU_035188_0_1_5"/>
<dbReference type="Proteomes" id="UP000001989">
    <property type="component" value="Chromosome"/>
</dbReference>
<dbReference type="GO" id="GO:0005737">
    <property type="term" value="C:cytoplasm"/>
    <property type="evidence" value="ECO:0007669"/>
    <property type="project" value="UniProtKB-SubCell"/>
</dbReference>
<dbReference type="GO" id="GO:0005524">
    <property type="term" value="F:ATP binding"/>
    <property type="evidence" value="ECO:0007669"/>
    <property type="project" value="UniProtKB-KW"/>
</dbReference>
<dbReference type="GO" id="GO:0000049">
    <property type="term" value="F:tRNA binding"/>
    <property type="evidence" value="ECO:0007669"/>
    <property type="project" value="UniProtKB-KW"/>
</dbReference>
<dbReference type="GO" id="GO:0103016">
    <property type="term" value="F:tRNA-uridine 2-sulfurtransferase activity"/>
    <property type="evidence" value="ECO:0007669"/>
    <property type="project" value="UniProtKB-EC"/>
</dbReference>
<dbReference type="GO" id="GO:0002143">
    <property type="term" value="P:tRNA wobble position uridine thiolation"/>
    <property type="evidence" value="ECO:0007669"/>
    <property type="project" value="TreeGrafter"/>
</dbReference>
<dbReference type="CDD" id="cd01998">
    <property type="entry name" value="MnmA_TRMU-like"/>
    <property type="match status" value="1"/>
</dbReference>
<dbReference type="FunFam" id="2.30.30.280:FF:000001">
    <property type="entry name" value="tRNA-specific 2-thiouridylase MnmA"/>
    <property type="match status" value="1"/>
</dbReference>
<dbReference type="FunFam" id="3.40.50.620:FF:000115">
    <property type="entry name" value="tRNA-specific 2-thiouridylase MnmA"/>
    <property type="match status" value="1"/>
</dbReference>
<dbReference type="Gene3D" id="2.30.30.280">
    <property type="entry name" value="Adenine nucleotide alpha hydrolases-like domains"/>
    <property type="match status" value="1"/>
</dbReference>
<dbReference type="Gene3D" id="3.40.50.620">
    <property type="entry name" value="HUPs"/>
    <property type="match status" value="1"/>
</dbReference>
<dbReference type="Gene3D" id="2.40.30.10">
    <property type="entry name" value="Translation factors"/>
    <property type="match status" value="1"/>
</dbReference>
<dbReference type="HAMAP" id="MF_00144">
    <property type="entry name" value="tRNA_thiouridyl_MnmA"/>
    <property type="match status" value="1"/>
</dbReference>
<dbReference type="InterPro" id="IPR004506">
    <property type="entry name" value="MnmA-like"/>
</dbReference>
<dbReference type="InterPro" id="IPR046885">
    <property type="entry name" value="MnmA-like_C"/>
</dbReference>
<dbReference type="InterPro" id="IPR046884">
    <property type="entry name" value="MnmA-like_central"/>
</dbReference>
<dbReference type="InterPro" id="IPR023382">
    <property type="entry name" value="MnmA-like_central_sf"/>
</dbReference>
<dbReference type="InterPro" id="IPR014729">
    <property type="entry name" value="Rossmann-like_a/b/a_fold"/>
</dbReference>
<dbReference type="NCBIfam" id="NF001138">
    <property type="entry name" value="PRK00143.1"/>
    <property type="match status" value="1"/>
</dbReference>
<dbReference type="NCBIfam" id="TIGR00420">
    <property type="entry name" value="trmU"/>
    <property type="match status" value="1"/>
</dbReference>
<dbReference type="PANTHER" id="PTHR11933:SF5">
    <property type="entry name" value="MITOCHONDRIAL TRNA-SPECIFIC 2-THIOURIDYLASE 1"/>
    <property type="match status" value="1"/>
</dbReference>
<dbReference type="PANTHER" id="PTHR11933">
    <property type="entry name" value="TRNA 5-METHYLAMINOMETHYL-2-THIOURIDYLATE -METHYLTRANSFERASE"/>
    <property type="match status" value="1"/>
</dbReference>
<dbReference type="Pfam" id="PF03054">
    <property type="entry name" value="tRNA_Me_trans"/>
    <property type="match status" value="1"/>
</dbReference>
<dbReference type="Pfam" id="PF20258">
    <property type="entry name" value="tRNA_Me_trans_C"/>
    <property type="match status" value="1"/>
</dbReference>
<dbReference type="Pfam" id="PF20259">
    <property type="entry name" value="tRNA_Me_trans_M"/>
    <property type="match status" value="1"/>
</dbReference>
<dbReference type="SUPFAM" id="SSF52402">
    <property type="entry name" value="Adenine nucleotide alpha hydrolases-like"/>
    <property type="match status" value="1"/>
</dbReference>
<protein>
    <recommendedName>
        <fullName evidence="1">tRNA-specific 2-thiouridylase MnmA</fullName>
        <ecNumber evidence="1">2.8.1.13</ecNumber>
    </recommendedName>
</protein>
<proteinExistence type="inferred from homology"/>
<comment type="function">
    <text evidence="1">Catalyzes the 2-thiolation of uridine at the wobble position (U34) of tRNA, leading to the formation of s(2)U34.</text>
</comment>
<comment type="catalytic activity">
    <reaction evidence="1">
        <text>S-sulfanyl-L-cysteinyl-[protein] + uridine(34) in tRNA + AH2 + ATP = 2-thiouridine(34) in tRNA + L-cysteinyl-[protein] + A + AMP + diphosphate + H(+)</text>
        <dbReference type="Rhea" id="RHEA:47032"/>
        <dbReference type="Rhea" id="RHEA-COMP:10131"/>
        <dbReference type="Rhea" id="RHEA-COMP:11726"/>
        <dbReference type="Rhea" id="RHEA-COMP:11727"/>
        <dbReference type="Rhea" id="RHEA-COMP:11728"/>
        <dbReference type="ChEBI" id="CHEBI:13193"/>
        <dbReference type="ChEBI" id="CHEBI:15378"/>
        <dbReference type="ChEBI" id="CHEBI:17499"/>
        <dbReference type="ChEBI" id="CHEBI:29950"/>
        <dbReference type="ChEBI" id="CHEBI:30616"/>
        <dbReference type="ChEBI" id="CHEBI:33019"/>
        <dbReference type="ChEBI" id="CHEBI:61963"/>
        <dbReference type="ChEBI" id="CHEBI:65315"/>
        <dbReference type="ChEBI" id="CHEBI:87170"/>
        <dbReference type="ChEBI" id="CHEBI:456215"/>
        <dbReference type="EC" id="2.8.1.13"/>
    </reaction>
</comment>
<comment type="subcellular location">
    <subcellularLocation>
        <location evidence="1">Cytoplasm</location>
    </subcellularLocation>
</comment>
<comment type="similarity">
    <text evidence="1">Belongs to the MnmA/TRMU family.</text>
</comment>
<comment type="sequence caution" evidence="2">
    <conflict type="erroneous initiation">
        <sequence resource="EMBL-CDS" id="ABQ71088"/>
    </conflict>
</comment>
<sequence length="378" mass="40098">MGAPMNPEFQLEGRAPGSLAGARIVVAMSGGVDSSVVAALAAASGAETIGVTLQLYDHGAAVGRTGSCCAGQDIRDARAVADRLGIAHYVFDYESRFRDSVIADFADEYAAGRTPIPCVRCNQGVKFTDLFGIARDLGADCLATGHYVRRVVGAGGRAELHRAADPARDQSYFLFATTRDQLDYLRFPLGAMPKPRVREIAAELGLGVAAKPDSQDICFVPDGDYASIVKRLRPEAAEEGEIVGLDGRVLGRHRGLIHFTVGQRRGIEIGGSPEPLYVVRLEPETKRLVVGPRRALAVSAAMLDDVNWIGEGYEGPLTAKVRSLAKPVPARFEDGAVRFDQPEYGVAPGQAAVLYAGDRVLGGGWIRATVPAELAVAA</sequence>
<evidence type="ECO:0000255" key="1">
    <source>
        <dbReference type="HAMAP-Rule" id="MF_00144"/>
    </source>
</evidence>
<evidence type="ECO:0000305" key="2"/>
<accession>A5VFM2</accession>
<keyword id="KW-0067">ATP-binding</keyword>
<keyword id="KW-0963">Cytoplasm</keyword>
<keyword id="KW-1015">Disulfide bond</keyword>
<keyword id="KW-0547">Nucleotide-binding</keyword>
<keyword id="KW-1185">Reference proteome</keyword>
<keyword id="KW-0694">RNA-binding</keyword>
<keyword id="KW-0808">Transferase</keyword>
<keyword id="KW-0819">tRNA processing</keyword>
<keyword id="KW-0820">tRNA-binding</keyword>
<feature type="chain" id="PRO_0000349804" description="tRNA-specific 2-thiouridylase MnmA">
    <location>
        <begin position="1"/>
        <end position="378"/>
    </location>
</feature>
<feature type="region of interest" description="Interaction with tRNA" evidence="1">
    <location>
        <begin position="168"/>
        <end position="170"/>
    </location>
</feature>
<feature type="active site" description="Nucleophile" evidence="1">
    <location>
        <position position="121"/>
    </location>
</feature>
<feature type="active site" description="Cysteine persulfide intermediate" evidence="1">
    <location>
        <position position="218"/>
    </location>
</feature>
<feature type="binding site" evidence="1">
    <location>
        <begin position="27"/>
        <end position="34"/>
    </location>
    <ligand>
        <name>ATP</name>
        <dbReference type="ChEBI" id="CHEBI:30616"/>
    </ligand>
</feature>
<feature type="binding site" evidence="1">
    <location>
        <position position="53"/>
    </location>
    <ligand>
        <name>ATP</name>
        <dbReference type="ChEBI" id="CHEBI:30616"/>
    </ligand>
</feature>
<feature type="binding site" evidence="1">
    <location>
        <position position="145"/>
    </location>
    <ligand>
        <name>ATP</name>
        <dbReference type="ChEBI" id="CHEBI:30616"/>
    </ligand>
</feature>
<feature type="site" description="Interaction with tRNA" evidence="1">
    <location>
        <position position="146"/>
    </location>
</feature>
<feature type="site" description="Interaction with tRNA" evidence="1">
    <location>
        <position position="350"/>
    </location>
</feature>
<feature type="disulfide bond" description="Alternate" evidence="1">
    <location>
        <begin position="121"/>
        <end position="218"/>
    </location>
</feature>
<reference key="1">
    <citation type="journal article" date="2010" name="J. Bacteriol.">
        <title>Genome sequence of the dioxin-mineralizing bacterium Sphingomonas wittichii RW1.</title>
        <authorList>
            <person name="Miller T.R."/>
            <person name="Delcher A.L."/>
            <person name="Salzberg S.L."/>
            <person name="Saunders E."/>
            <person name="Detter J.C."/>
            <person name="Halden R.U."/>
        </authorList>
    </citation>
    <scope>NUCLEOTIDE SEQUENCE [LARGE SCALE GENOMIC DNA]</scope>
    <source>
        <strain>DSM 6014 / CCUG 31198 / JCM 15750 / NBRC 105917 / EY 4224 / RW1</strain>
    </source>
</reference>
<organism>
    <name type="scientific">Rhizorhabdus wittichii (strain DSM 6014 / CCUG 31198 / JCM 15750 / NBRC 105917 / EY 4224 / RW1)</name>
    <name type="common">Sphingomonas wittichii</name>
    <dbReference type="NCBI Taxonomy" id="392499"/>
    <lineage>
        <taxon>Bacteria</taxon>
        <taxon>Pseudomonadati</taxon>
        <taxon>Pseudomonadota</taxon>
        <taxon>Alphaproteobacteria</taxon>
        <taxon>Sphingomonadales</taxon>
        <taxon>Sphingomonadaceae</taxon>
        <taxon>Rhizorhabdus</taxon>
    </lineage>
</organism>
<gene>
    <name evidence="1" type="primary">mnmA</name>
    <name type="ordered locus">Swit_4751</name>
</gene>